<dbReference type="EMBL" id="U00096">
    <property type="protein sequence ID" value="ACO60006.1"/>
    <property type="molecule type" value="Genomic_DNA"/>
</dbReference>
<dbReference type="EMBL" id="AP009048">
    <property type="status" value="NOT_ANNOTATED_CDS"/>
    <property type="molecule type" value="Genomic_DNA"/>
</dbReference>
<dbReference type="RefSeq" id="WP_001010156.1">
    <property type="nucleotide sequence ID" value="NZ_STEB01000001.1"/>
</dbReference>
<dbReference type="RefSeq" id="YP_002791254.1">
    <property type="nucleotide sequence ID" value="NC_000913.3"/>
</dbReference>
<dbReference type="STRING" id="511145.b4684"/>
<dbReference type="PaxDb" id="511145-b4684"/>
<dbReference type="EnsemblBacteria" id="ACO60006">
    <property type="protein sequence ID" value="ACO60006"/>
    <property type="gene ID" value="b4684"/>
</dbReference>
<dbReference type="GeneID" id="7751638"/>
<dbReference type="KEGG" id="eco:b4684"/>
<dbReference type="KEGG" id="ecoc:C3026_15840"/>
<dbReference type="PATRIC" id="fig|511145.12.peg.2981"/>
<dbReference type="InParanoid" id="C1P614"/>
<dbReference type="BioCyc" id="EcoCyc:MONOMER0-2883"/>
<dbReference type="PRO" id="PR:C1P614"/>
<dbReference type="Proteomes" id="UP000000625">
    <property type="component" value="Chromosome"/>
</dbReference>
<evidence type="ECO:0000255" key="1"/>
<evidence type="ECO:0000269" key="2">
    <source>
    </source>
</evidence>
<protein>
    <recommendedName>
        <fullName>Uncharacterized protein YqfG</fullName>
    </recommendedName>
</protein>
<name>YQFG_ECOLI</name>
<gene>
    <name type="primary">yqfG</name>
    <name type="ordered locus">b4684</name>
    <name type="ordered locus">JW5470.1</name>
</gene>
<keyword id="KW-1185">Reference proteome</keyword>
<keyword id="KW-0732">Signal</keyword>
<comment type="induction">
    <text evidence="2">In stationary phase (at protein level).</text>
</comment>
<proteinExistence type="evidence at protein level"/>
<sequence length="41" mass="4791">MNFLMRAIFSLLLLFTLSIPVISDCVAMAIESRFKYMMLLF</sequence>
<organism>
    <name type="scientific">Escherichia coli (strain K12)</name>
    <dbReference type="NCBI Taxonomy" id="83333"/>
    <lineage>
        <taxon>Bacteria</taxon>
        <taxon>Pseudomonadati</taxon>
        <taxon>Pseudomonadota</taxon>
        <taxon>Gammaproteobacteria</taxon>
        <taxon>Enterobacterales</taxon>
        <taxon>Enterobacteriaceae</taxon>
        <taxon>Escherichia</taxon>
    </lineage>
</organism>
<reference key="1">
    <citation type="journal article" date="1997" name="Science">
        <title>The complete genome sequence of Escherichia coli K-12.</title>
        <authorList>
            <person name="Blattner F.R."/>
            <person name="Plunkett G. III"/>
            <person name="Bloch C.A."/>
            <person name="Perna N.T."/>
            <person name="Burland V."/>
            <person name="Riley M."/>
            <person name="Collado-Vides J."/>
            <person name="Glasner J.D."/>
            <person name="Rode C.K."/>
            <person name="Mayhew G.F."/>
            <person name="Gregor J."/>
            <person name="Davis N.W."/>
            <person name="Kirkpatrick H.A."/>
            <person name="Goeden M.A."/>
            <person name="Rose D.J."/>
            <person name="Mau B."/>
            <person name="Shao Y."/>
        </authorList>
    </citation>
    <scope>NUCLEOTIDE SEQUENCE [LARGE SCALE GENOMIC DNA]</scope>
    <source>
        <strain>K12 / MG1655 / ATCC 47076</strain>
    </source>
</reference>
<reference key="2">
    <citation type="journal article" date="2006" name="Mol. Syst. Biol.">
        <title>Highly accurate genome sequences of Escherichia coli K-12 strains MG1655 and W3110.</title>
        <authorList>
            <person name="Hayashi K."/>
            <person name="Morooka N."/>
            <person name="Yamamoto Y."/>
            <person name="Fujita K."/>
            <person name="Isono K."/>
            <person name="Choi S."/>
            <person name="Ohtsubo E."/>
            <person name="Baba T."/>
            <person name="Wanner B.L."/>
            <person name="Mori H."/>
            <person name="Horiuchi T."/>
        </authorList>
    </citation>
    <scope>NUCLEOTIDE SEQUENCE [LARGE SCALE GENOMIC DNA]</scope>
    <source>
        <strain>K12 / W3110 / ATCC 27325 / DSM 5911</strain>
    </source>
</reference>
<reference key="3">
    <citation type="journal article" date="2008" name="Mol. Microbiol.">
        <title>Small membrane proteins found by comparative genomics and ribosome binding site models.</title>
        <authorList>
            <person name="Hemm M.R."/>
            <person name="Paul B.J."/>
            <person name="Schneider T.D."/>
            <person name="Storz G."/>
            <person name="Rudd K.E."/>
        </authorList>
    </citation>
    <scope>IDENTIFICATION</scope>
    <scope>INDUCTION</scope>
    <source>
        <strain>K12 / MG1655 / ATCC 47076</strain>
    </source>
</reference>
<feature type="signal peptide" evidence="1">
    <location>
        <begin position="1"/>
        <end position="23"/>
    </location>
</feature>
<feature type="chain" id="PRO_0000381990" description="Uncharacterized protein YqfG">
    <location>
        <begin position="24"/>
        <end position="41"/>
    </location>
</feature>
<accession>C1P614</accession>